<gene>
    <name type="primary">MCPA</name>
    <name type="ORF">TRV_07931</name>
</gene>
<organism>
    <name type="scientific">Trichophyton verrucosum (strain HKI 0517)</name>
    <dbReference type="NCBI Taxonomy" id="663202"/>
    <lineage>
        <taxon>Eukaryota</taxon>
        <taxon>Fungi</taxon>
        <taxon>Dikarya</taxon>
        <taxon>Ascomycota</taxon>
        <taxon>Pezizomycotina</taxon>
        <taxon>Eurotiomycetes</taxon>
        <taxon>Eurotiomycetidae</taxon>
        <taxon>Onygenales</taxon>
        <taxon>Arthrodermataceae</taxon>
        <taxon>Trichophyton</taxon>
    </lineage>
</organism>
<reference key="1">
    <citation type="journal article" date="2011" name="Genome Biol.">
        <title>Comparative and functional genomics provide insights into the pathogenicity of dermatophytic fungi.</title>
        <authorList>
            <person name="Burmester A."/>
            <person name="Shelest E."/>
            <person name="Gloeckner G."/>
            <person name="Heddergott C."/>
            <person name="Schindler S."/>
            <person name="Staib P."/>
            <person name="Heidel A."/>
            <person name="Felder M."/>
            <person name="Petzold A."/>
            <person name="Szafranski K."/>
            <person name="Feuermann M."/>
            <person name="Pedruzzi I."/>
            <person name="Priebe S."/>
            <person name="Groth M."/>
            <person name="Winkler R."/>
            <person name="Li W."/>
            <person name="Kniemeyer O."/>
            <person name="Schroeckh V."/>
            <person name="Hertweck C."/>
            <person name="Hube B."/>
            <person name="White T.C."/>
            <person name="Platzer M."/>
            <person name="Guthke R."/>
            <person name="Heitman J."/>
            <person name="Woestemeyer J."/>
            <person name="Zipfel P.F."/>
            <person name="Monod M."/>
            <person name="Brakhage A.A."/>
        </authorList>
    </citation>
    <scope>NUCLEOTIDE SEQUENCE [LARGE SCALE GENOMIC DNA]</scope>
    <source>
        <strain>HKI 0517</strain>
    </source>
</reference>
<evidence type="ECO:0000250" key="1"/>
<evidence type="ECO:0000255" key="2"/>
<evidence type="ECO:0000255" key="3">
    <source>
        <dbReference type="PROSITE-ProRule" id="PRU01379"/>
    </source>
</evidence>
<evidence type="ECO:0000305" key="4"/>
<accession>D4DL57</accession>
<keyword id="KW-0121">Carboxypeptidase</keyword>
<keyword id="KW-1015">Disulfide bond</keyword>
<keyword id="KW-0378">Hydrolase</keyword>
<keyword id="KW-0479">Metal-binding</keyword>
<keyword id="KW-0482">Metalloprotease</keyword>
<keyword id="KW-0645">Protease</keyword>
<keyword id="KW-0964">Secreted</keyword>
<keyword id="KW-0732">Signal</keyword>
<keyword id="KW-0843">Virulence</keyword>
<keyword id="KW-0862">Zinc</keyword>
<keyword id="KW-0865">Zymogen</keyword>
<sequence length="422" mass="47132">MRSVLSLALLAVNVVTAAVVAPFDYSGYKVIRVPTQKDNVKEVQRIITDLNLDTWKYPKSEGQNADIVVPPSQISSFMERISGMNIEMMHEDLGLSIRNETSFEAYSAGYAPDINWFKSYHSYQDHLSYLQDLQGLFRTRSEYVDAGKSHEGRTIPALHIWGSGGKNSKPAIIFHGTIHAREWITTMVTEYMAWSFLSQYNKNADITSIVDNFDIWIFPIVNPDGFAFTQTSNRLWRKNRQPNPNARCPGRDLNRNYPYQWVGPGSSSNPCSDTYRGAQPGDGTEIKVHIANMKKIAANKGIAMFVDWHSYGQLFMSPYGYSCTARPPTDARHQELSRIFAQALKAVHGTPYKTGPICNTIYQVNGDSVDYALEVLKVKLSLTAELRDTGARGFVLPADQIIPSGEETLAGTVAMLKAVIQG</sequence>
<dbReference type="EC" id="3.4.17.-"/>
<dbReference type="EMBL" id="ACYE01000493">
    <property type="protein sequence ID" value="EFE37398.1"/>
    <property type="molecule type" value="Genomic_DNA"/>
</dbReference>
<dbReference type="RefSeq" id="XP_003018043.1">
    <property type="nucleotide sequence ID" value="XM_003017997.1"/>
</dbReference>
<dbReference type="SMR" id="D4DL57"/>
<dbReference type="MEROPS" id="M14.014"/>
<dbReference type="GeneID" id="9579170"/>
<dbReference type="KEGG" id="tve:TRV_07931"/>
<dbReference type="HOGENOM" id="CLU_019326_1_1_1"/>
<dbReference type="OrthoDB" id="587at34384"/>
<dbReference type="Proteomes" id="UP000008383">
    <property type="component" value="Unassembled WGS sequence"/>
</dbReference>
<dbReference type="GO" id="GO:0005576">
    <property type="term" value="C:extracellular region"/>
    <property type="evidence" value="ECO:0007669"/>
    <property type="project" value="UniProtKB-SubCell"/>
</dbReference>
<dbReference type="GO" id="GO:0004181">
    <property type="term" value="F:metallocarboxypeptidase activity"/>
    <property type="evidence" value="ECO:0007669"/>
    <property type="project" value="InterPro"/>
</dbReference>
<dbReference type="GO" id="GO:0008270">
    <property type="term" value="F:zinc ion binding"/>
    <property type="evidence" value="ECO:0007669"/>
    <property type="project" value="InterPro"/>
</dbReference>
<dbReference type="GO" id="GO:0006508">
    <property type="term" value="P:proteolysis"/>
    <property type="evidence" value="ECO:0007669"/>
    <property type="project" value="UniProtKB-KW"/>
</dbReference>
<dbReference type="CDD" id="cd03860">
    <property type="entry name" value="M14_CP_A-B_like"/>
    <property type="match status" value="1"/>
</dbReference>
<dbReference type="FunFam" id="3.40.630.10:FF:000040">
    <property type="entry name" value="zinc carboxypeptidase"/>
    <property type="match status" value="1"/>
</dbReference>
<dbReference type="Gene3D" id="3.30.70.340">
    <property type="entry name" value="Metallocarboxypeptidase-like"/>
    <property type="match status" value="1"/>
</dbReference>
<dbReference type="Gene3D" id="3.40.630.10">
    <property type="entry name" value="Zn peptidases"/>
    <property type="match status" value="1"/>
</dbReference>
<dbReference type="InterPro" id="IPR036990">
    <property type="entry name" value="M14A-like_propep"/>
</dbReference>
<dbReference type="InterPro" id="IPR003146">
    <property type="entry name" value="M14A_act_pep"/>
</dbReference>
<dbReference type="InterPro" id="IPR000834">
    <property type="entry name" value="Peptidase_M14"/>
</dbReference>
<dbReference type="PANTHER" id="PTHR11705">
    <property type="entry name" value="PROTEASE FAMILY M14 CARBOXYPEPTIDASE A,B"/>
    <property type="match status" value="1"/>
</dbReference>
<dbReference type="PANTHER" id="PTHR11705:SF143">
    <property type="entry name" value="SLL0236 PROTEIN"/>
    <property type="match status" value="1"/>
</dbReference>
<dbReference type="Pfam" id="PF00246">
    <property type="entry name" value="Peptidase_M14"/>
    <property type="match status" value="1"/>
</dbReference>
<dbReference type="Pfam" id="PF02244">
    <property type="entry name" value="Propep_M14"/>
    <property type="match status" value="1"/>
</dbReference>
<dbReference type="PRINTS" id="PR00765">
    <property type="entry name" value="CRBOXYPTASEA"/>
</dbReference>
<dbReference type="SMART" id="SM00631">
    <property type="entry name" value="Zn_pept"/>
    <property type="match status" value="1"/>
</dbReference>
<dbReference type="SUPFAM" id="SSF54897">
    <property type="entry name" value="Protease propeptides/inhibitors"/>
    <property type="match status" value="1"/>
</dbReference>
<dbReference type="SUPFAM" id="SSF53187">
    <property type="entry name" value="Zn-dependent exopeptidases"/>
    <property type="match status" value="1"/>
</dbReference>
<dbReference type="PROSITE" id="PS00132">
    <property type="entry name" value="CARBOXYPEPT_ZN_1"/>
    <property type="match status" value="1"/>
</dbReference>
<dbReference type="PROSITE" id="PS52035">
    <property type="entry name" value="PEPTIDASE_M14"/>
    <property type="match status" value="1"/>
</dbReference>
<comment type="function">
    <text evidence="1">Extracellular metalloprotease that contributes to pathogenicity.</text>
</comment>
<comment type="cofactor">
    <cofactor evidence="1">
        <name>Zn(2+)</name>
        <dbReference type="ChEBI" id="CHEBI:29105"/>
    </cofactor>
    <text evidence="1">Binds 1 zinc ion per subunit.</text>
</comment>
<comment type="subcellular location">
    <subcellularLocation>
        <location evidence="1">Secreted</location>
    </subcellularLocation>
</comment>
<comment type="similarity">
    <text evidence="4">Belongs to the peptidase M14 family.</text>
</comment>
<proteinExistence type="inferred from homology"/>
<protein>
    <recommendedName>
        <fullName>Probable metallocarboxypeptidase A</fullName>
        <shortName>MCPA</shortName>
        <ecNumber>3.4.17.-</ecNumber>
    </recommendedName>
    <alternativeName>
        <fullName>Carboxypeptidase M14A</fullName>
    </alternativeName>
</protein>
<feature type="signal peptide" evidence="2">
    <location>
        <begin position="1"/>
        <end position="17"/>
    </location>
</feature>
<feature type="propeptide" id="PRO_0000397760" description="Activation peptide" evidence="1">
    <location>
        <begin position="18"/>
        <end position="112"/>
    </location>
</feature>
<feature type="chain" id="PRO_0000397761" description="Probable metallocarboxypeptidase A">
    <location>
        <begin position="113"/>
        <end position="422"/>
    </location>
</feature>
<feature type="domain" description="Peptidase M14" evidence="3">
    <location>
        <begin position="119"/>
        <end position="419"/>
    </location>
</feature>
<feature type="active site" description="Proton donor/acceptor" evidence="3">
    <location>
        <position position="385"/>
    </location>
</feature>
<feature type="binding site" evidence="1">
    <location>
        <begin position="179"/>
        <end position="182"/>
    </location>
    <ligand>
        <name>substrate</name>
    </ligand>
</feature>
<feature type="binding site" evidence="3">
    <location>
        <position position="179"/>
    </location>
    <ligand>
        <name>Zn(2+)</name>
        <dbReference type="ChEBI" id="CHEBI:29105"/>
        <note>catalytic</note>
    </ligand>
</feature>
<feature type="binding site" evidence="3">
    <location>
        <position position="182"/>
    </location>
    <ligand>
        <name>Zn(2+)</name>
        <dbReference type="ChEBI" id="CHEBI:29105"/>
        <note>catalytic</note>
    </ligand>
</feature>
<feature type="binding site" evidence="1">
    <location>
        <position position="237"/>
    </location>
    <ligand>
        <name>substrate</name>
    </ligand>
</feature>
<feature type="binding site" evidence="1">
    <location>
        <begin position="254"/>
        <end position="255"/>
    </location>
    <ligand>
        <name>substrate</name>
    </ligand>
</feature>
<feature type="binding site" evidence="3">
    <location>
        <position position="309"/>
    </location>
    <ligand>
        <name>Zn(2+)</name>
        <dbReference type="ChEBI" id="CHEBI:29105"/>
        <note>catalytic</note>
    </ligand>
</feature>
<feature type="binding site" evidence="1">
    <location>
        <begin position="310"/>
        <end position="311"/>
    </location>
    <ligand>
        <name>substrate</name>
    </ligand>
</feature>
<feature type="disulfide bond" evidence="1">
    <location>
        <begin position="248"/>
        <end position="271"/>
    </location>
</feature>
<name>MCPA_TRIVH</name>